<reference key="1">
    <citation type="journal article" date="2016" name="Genome Announc.">
        <title>Complete genome sequence of Alkaliphilus metalliredigens strain QYMF, an alkaliphilic and metal-reducing bacterium isolated from borax-contaminated leachate ponds.</title>
        <authorList>
            <person name="Hwang C."/>
            <person name="Copeland A."/>
            <person name="Lucas S."/>
            <person name="Lapidus A."/>
            <person name="Barry K."/>
            <person name="Detter J.C."/>
            <person name="Glavina Del Rio T."/>
            <person name="Hammon N."/>
            <person name="Israni S."/>
            <person name="Dalin E."/>
            <person name="Tice H."/>
            <person name="Pitluck S."/>
            <person name="Chertkov O."/>
            <person name="Brettin T."/>
            <person name="Bruce D."/>
            <person name="Han C."/>
            <person name="Schmutz J."/>
            <person name="Larimer F."/>
            <person name="Land M.L."/>
            <person name="Hauser L."/>
            <person name="Kyrpides N."/>
            <person name="Mikhailova N."/>
            <person name="Ye Q."/>
            <person name="Zhou J."/>
            <person name="Richardson P."/>
            <person name="Fields M.W."/>
        </authorList>
    </citation>
    <scope>NUCLEOTIDE SEQUENCE [LARGE SCALE GENOMIC DNA]</scope>
    <source>
        <strain>QYMF</strain>
    </source>
</reference>
<organism>
    <name type="scientific">Alkaliphilus metalliredigens (strain QYMF)</name>
    <dbReference type="NCBI Taxonomy" id="293826"/>
    <lineage>
        <taxon>Bacteria</taxon>
        <taxon>Bacillati</taxon>
        <taxon>Bacillota</taxon>
        <taxon>Clostridia</taxon>
        <taxon>Peptostreptococcales</taxon>
        <taxon>Natronincolaceae</taxon>
        <taxon>Alkaliphilus</taxon>
    </lineage>
</organism>
<comment type="function">
    <text evidence="1">Reversibly transfers an adenylyl group from ATP to 4'-phosphopantetheine, yielding dephospho-CoA (dPCoA) and pyrophosphate.</text>
</comment>
<comment type="catalytic activity">
    <reaction evidence="1">
        <text>(R)-4'-phosphopantetheine + ATP + H(+) = 3'-dephospho-CoA + diphosphate</text>
        <dbReference type="Rhea" id="RHEA:19801"/>
        <dbReference type="ChEBI" id="CHEBI:15378"/>
        <dbReference type="ChEBI" id="CHEBI:30616"/>
        <dbReference type="ChEBI" id="CHEBI:33019"/>
        <dbReference type="ChEBI" id="CHEBI:57328"/>
        <dbReference type="ChEBI" id="CHEBI:61723"/>
        <dbReference type="EC" id="2.7.7.3"/>
    </reaction>
</comment>
<comment type="cofactor">
    <cofactor evidence="1">
        <name>Mg(2+)</name>
        <dbReference type="ChEBI" id="CHEBI:18420"/>
    </cofactor>
</comment>
<comment type="pathway">
    <text evidence="1">Cofactor biosynthesis; coenzyme A biosynthesis; CoA from (R)-pantothenate: step 4/5.</text>
</comment>
<comment type="subunit">
    <text evidence="1">Homohexamer.</text>
</comment>
<comment type="subcellular location">
    <subcellularLocation>
        <location evidence="1">Cytoplasm</location>
    </subcellularLocation>
</comment>
<comment type="similarity">
    <text evidence="1">Belongs to the bacterial CoaD family.</text>
</comment>
<protein>
    <recommendedName>
        <fullName evidence="1">Phosphopantetheine adenylyltransferase</fullName>
        <ecNumber evidence="1">2.7.7.3</ecNumber>
    </recommendedName>
    <alternativeName>
        <fullName evidence="1">Dephospho-CoA pyrophosphorylase</fullName>
    </alternativeName>
    <alternativeName>
        <fullName evidence="1">Pantetheine-phosphate adenylyltransferase</fullName>
        <shortName evidence="1">PPAT</shortName>
    </alternativeName>
</protein>
<evidence type="ECO:0000255" key="1">
    <source>
        <dbReference type="HAMAP-Rule" id="MF_00151"/>
    </source>
</evidence>
<accession>A6TRV0</accession>
<gene>
    <name evidence="1" type="primary">coaD</name>
    <name type="ordered locus">Amet_2767</name>
</gene>
<proteinExistence type="inferred from homology"/>
<feature type="chain" id="PRO_1000058154" description="Phosphopantetheine adenylyltransferase">
    <location>
        <begin position="1"/>
        <end position="157"/>
    </location>
</feature>
<feature type="binding site" evidence="1">
    <location>
        <begin position="9"/>
        <end position="10"/>
    </location>
    <ligand>
        <name>ATP</name>
        <dbReference type="ChEBI" id="CHEBI:30616"/>
    </ligand>
</feature>
<feature type="binding site" evidence="1">
    <location>
        <position position="9"/>
    </location>
    <ligand>
        <name>substrate</name>
    </ligand>
</feature>
<feature type="binding site" evidence="1">
    <location>
        <position position="17"/>
    </location>
    <ligand>
        <name>ATP</name>
        <dbReference type="ChEBI" id="CHEBI:30616"/>
    </ligand>
</feature>
<feature type="binding site" evidence="1">
    <location>
        <position position="41"/>
    </location>
    <ligand>
        <name>substrate</name>
    </ligand>
</feature>
<feature type="binding site" evidence="1">
    <location>
        <position position="73"/>
    </location>
    <ligand>
        <name>substrate</name>
    </ligand>
</feature>
<feature type="binding site" evidence="1">
    <location>
        <position position="87"/>
    </location>
    <ligand>
        <name>substrate</name>
    </ligand>
</feature>
<feature type="binding site" evidence="1">
    <location>
        <begin position="88"/>
        <end position="90"/>
    </location>
    <ligand>
        <name>ATP</name>
        <dbReference type="ChEBI" id="CHEBI:30616"/>
    </ligand>
</feature>
<feature type="binding site" evidence="1">
    <location>
        <position position="98"/>
    </location>
    <ligand>
        <name>ATP</name>
        <dbReference type="ChEBI" id="CHEBI:30616"/>
    </ligand>
</feature>
<feature type="binding site" evidence="1">
    <location>
        <begin position="123"/>
        <end position="129"/>
    </location>
    <ligand>
        <name>ATP</name>
        <dbReference type="ChEBI" id="CHEBI:30616"/>
    </ligand>
</feature>
<feature type="site" description="Transition state stabilizer" evidence="1">
    <location>
        <position position="17"/>
    </location>
</feature>
<dbReference type="EC" id="2.7.7.3" evidence="1"/>
<dbReference type="EMBL" id="CP000724">
    <property type="protein sequence ID" value="ABR48918.1"/>
    <property type="molecule type" value="Genomic_DNA"/>
</dbReference>
<dbReference type="RefSeq" id="WP_012063890.1">
    <property type="nucleotide sequence ID" value="NC_009633.1"/>
</dbReference>
<dbReference type="SMR" id="A6TRV0"/>
<dbReference type="STRING" id="293826.Amet_2767"/>
<dbReference type="KEGG" id="amt:Amet_2767"/>
<dbReference type="eggNOG" id="COG0669">
    <property type="taxonomic scope" value="Bacteria"/>
</dbReference>
<dbReference type="HOGENOM" id="CLU_100149_0_1_9"/>
<dbReference type="OrthoDB" id="9806661at2"/>
<dbReference type="UniPathway" id="UPA00241">
    <property type="reaction ID" value="UER00355"/>
</dbReference>
<dbReference type="Proteomes" id="UP000001572">
    <property type="component" value="Chromosome"/>
</dbReference>
<dbReference type="GO" id="GO:0005737">
    <property type="term" value="C:cytoplasm"/>
    <property type="evidence" value="ECO:0007669"/>
    <property type="project" value="UniProtKB-SubCell"/>
</dbReference>
<dbReference type="GO" id="GO:0005524">
    <property type="term" value="F:ATP binding"/>
    <property type="evidence" value="ECO:0007669"/>
    <property type="project" value="UniProtKB-KW"/>
</dbReference>
<dbReference type="GO" id="GO:0004595">
    <property type="term" value="F:pantetheine-phosphate adenylyltransferase activity"/>
    <property type="evidence" value="ECO:0007669"/>
    <property type="project" value="UniProtKB-UniRule"/>
</dbReference>
<dbReference type="GO" id="GO:0015937">
    <property type="term" value="P:coenzyme A biosynthetic process"/>
    <property type="evidence" value="ECO:0007669"/>
    <property type="project" value="UniProtKB-UniRule"/>
</dbReference>
<dbReference type="CDD" id="cd02163">
    <property type="entry name" value="PPAT"/>
    <property type="match status" value="1"/>
</dbReference>
<dbReference type="FunFam" id="3.40.50.620:FF:000012">
    <property type="entry name" value="Phosphopantetheine adenylyltransferase"/>
    <property type="match status" value="1"/>
</dbReference>
<dbReference type="Gene3D" id="3.40.50.620">
    <property type="entry name" value="HUPs"/>
    <property type="match status" value="1"/>
</dbReference>
<dbReference type="HAMAP" id="MF_00151">
    <property type="entry name" value="PPAT_bact"/>
    <property type="match status" value="1"/>
</dbReference>
<dbReference type="InterPro" id="IPR004821">
    <property type="entry name" value="Cyt_trans-like"/>
</dbReference>
<dbReference type="InterPro" id="IPR001980">
    <property type="entry name" value="PPAT"/>
</dbReference>
<dbReference type="InterPro" id="IPR014729">
    <property type="entry name" value="Rossmann-like_a/b/a_fold"/>
</dbReference>
<dbReference type="NCBIfam" id="TIGR01510">
    <property type="entry name" value="coaD_prev_kdtB"/>
    <property type="match status" value="1"/>
</dbReference>
<dbReference type="NCBIfam" id="TIGR00125">
    <property type="entry name" value="cyt_tran_rel"/>
    <property type="match status" value="1"/>
</dbReference>
<dbReference type="PANTHER" id="PTHR21342">
    <property type="entry name" value="PHOSPHOPANTETHEINE ADENYLYLTRANSFERASE"/>
    <property type="match status" value="1"/>
</dbReference>
<dbReference type="PANTHER" id="PTHR21342:SF1">
    <property type="entry name" value="PHOSPHOPANTETHEINE ADENYLYLTRANSFERASE"/>
    <property type="match status" value="1"/>
</dbReference>
<dbReference type="Pfam" id="PF01467">
    <property type="entry name" value="CTP_transf_like"/>
    <property type="match status" value="1"/>
</dbReference>
<dbReference type="PRINTS" id="PR01020">
    <property type="entry name" value="LPSBIOSNTHSS"/>
</dbReference>
<dbReference type="SUPFAM" id="SSF52374">
    <property type="entry name" value="Nucleotidylyl transferase"/>
    <property type="match status" value="1"/>
</dbReference>
<name>COAD_ALKMQ</name>
<sequence length="157" mass="17721">MKVGIYPGSFDPITNGHIDIIKRASEIYDRVIVSVMQNPNKNPMFTLGERVALIEQIIQPYSNIEVDCFSGLLIDYAREKGAKVIIKGLRAVSDFEYELQMALMNRKLCPEVETVFLMTNSQYSYLSSSLVKEVAKFKGDVSEFVPEIVLQAMSKKS</sequence>
<keyword id="KW-0067">ATP-binding</keyword>
<keyword id="KW-0173">Coenzyme A biosynthesis</keyword>
<keyword id="KW-0963">Cytoplasm</keyword>
<keyword id="KW-0460">Magnesium</keyword>
<keyword id="KW-0547">Nucleotide-binding</keyword>
<keyword id="KW-0548">Nucleotidyltransferase</keyword>
<keyword id="KW-1185">Reference proteome</keyword>
<keyword id="KW-0808">Transferase</keyword>